<reference key="1">
    <citation type="journal article" date="2001" name="Proc. Natl. Acad. Sci. U.S.A.">
        <title>Complete genomic sequence of Pasteurella multocida Pm70.</title>
        <authorList>
            <person name="May B.J."/>
            <person name="Zhang Q."/>
            <person name="Li L.L."/>
            <person name="Paustian M.L."/>
            <person name="Whittam T.S."/>
            <person name="Kapur V."/>
        </authorList>
    </citation>
    <scope>NUCLEOTIDE SEQUENCE [LARGE SCALE GENOMIC DNA]</scope>
    <source>
        <strain>Pm70</strain>
    </source>
</reference>
<dbReference type="EMBL" id="AE004439">
    <property type="protein sequence ID" value="AAK02920.1"/>
    <property type="molecule type" value="Genomic_DNA"/>
</dbReference>
<dbReference type="RefSeq" id="WP_005722603.1">
    <property type="nucleotide sequence ID" value="NC_002663.1"/>
</dbReference>
<dbReference type="SMR" id="Q9CMI8"/>
<dbReference type="STRING" id="272843.PM0836"/>
<dbReference type="EnsemblBacteria" id="AAK02920">
    <property type="protein sequence ID" value="AAK02920"/>
    <property type="gene ID" value="PM0836"/>
</dbReference>
<dbReference type="KEGG" id="pmu:PM0836"/>
<dbReference type="HOGENOM" id="CLU_153146_0_0_6"/>
<dbReference type="OrthoDB" id="90485at2"/>
<dbReference type="Proteomes" id="UP000000809">
    <property type="component" value="Chromosome"/>
</dbReference>
<dbReference type="GO" id="GO:0005829">
    <property type="term" value="C:cytosol"/>
    <property type="evidence" value="ECO:0007669"/>
    <property type="project" value="TreeGrafter"/>
</dbReference>
<dbReference type="HAMAP" id="MF_00683">
    <property type="entry name" value="Pole_loc_TmaR"/>
    <property type="match status" value="1"/>
</dbReference>
<dbReference type="InterPro" id="IPR007458">
    <property type="entry name" value="DUF496"/>
</dbReference>
<dbReference type="NCBIfam" id="NF003844">
    <property type="entry name" value="PRK05423.1"/>
    <property type="match status" value="1"/>
</dbReference>
<dbReference type="PANTHER" id="PTHR39591">
    <property type="entry name" value="UPF0265 PROTEIN YEEX"/>
    <property type="match status" value="1"/>
</dbReference>
<dbReference type="PANTHER" id="PTHR39591:SF1">
    <property type="entry name" value="UPF0265 PROTEIN YEEX"/>
    <property type="match status" value="1"/>
</dbReference>
<dbReference type="Pfam" id="PF04363">
    <property type="entry name" value="DUF496"/>
    <property type="match status" value="1"/>
</dbReference>
<dbReference type="PIRSF" id="PIRSF028773">
    <property type="entry name" value="UCP028773"/>
    <property type="match status" value="1"/>
</dbReference>
<keyword id="KW-0175">Coiled coil</keyword>
<keyword id="KW-0963">Cytoplasm</keyword>
<keyword id="KW-1185">Reference proteome</keyword>
<organism>
    <name type="scientific">Pasteurella multocida (strain Pm70)</name>
    <dbReference type="NCBI Taxonomy" id="272843"/>
    <lineage>
        <taxon>Bacteria</taxon>
        <taxon>Pseudomonadati</taxon>
        <taxon>Pseudomonadota</taxon>
        <taxon>Gammaproteobacteria</taxon>
        <taxon>Pasteurellales</taxon>
        <taxon>Pasteurellaceae</taxon>
        <taxon>Pasteurella</taxon>
    </lineage>
</organism>
<sequence length="112" mass="13948">MENVNKQSFQEVLEYVRMYRLKNKLARDREDNNRKIRDNQKRVLLLDNLNQYIRDDMSIQDVRTIIESMREDYEKRVDDYMIRNAEISQQRREIREKMKEQKQAHEVLLKKE</sequence>
<name>TMAR_PASMU</name>
<proteinExistence type="inferred from homology"/>
<feature type="chain" id="PRO_0000072765" description="Pole-localizer protein TmaR">
    <location>
        <begin position="1"/>
        <end position="112"/>
    </location>
</feature>
<feature type="coiled-coil region" evidence="1">
    <location>
        <begin position="70"/>
        <end position="111"/>
    </location>
</feature>
<accession>Q9CMI8</accession>
<gene>
    <name evidence="1" type="primary">tmaR</name>
    <name type="ordered locus">PM0836</name>
</gene>
<protein>
    <recommendedName>
        <fullName evidence="1">Pole-localizer protein TmaR</fullName>
    </recommendedName>
</protein>
<comment type="function">
    <text evidence="1">Pole-localizer protein involved in the regulation of several cellular processes.</text>
</comment>
<comment type="subcellular location">
    <subcellularLocation>
        <location evidence="1">Cytoplasm</location>
    </subcellularLocation>
</comment>
<comment type="similarity">
    <text evidence="1">Belongs to the pole-localizer TmaR family.</text>
</comment>
<evidence type="ECO:0000255" key="1">
    <source>
        <dbReference type="HAMAP-Rule" id="MF_00683"/>
    </source>
</evidence>